<sequence>MRCDRVWSKARLATFAAGRPGIGVVEDGVVASLSGRIVYAGPATEAPAFEALETLDCEGRWITPGLIDPHTHLVFGGDRAREFELRLAGATYEEIARAGGGIVSTMKATRAASEGELVASALPRLDALIAEGLTTIEIKSGYGLSLDDELKSLRAARALADVRKVSVTTTFLGAHALPPEYEGDPDGYIDHVCYQMIPAVAAEGLADAVDAFCEGIGFSRAQTRRVFQAARERGLPVKLHAEQLSNLDGAALAAEFGALSADHLEHLDGAGIAAMAQAGTTAVLLPGAFYFVRETRLPPIQALRAAGVPLALATDCNPGTSPLTSLLLTLNMAATLFRMTVDECLAGVTREAARAIGRLDHIGTLEAGKSCDLAIWDIERPAQLVYRMGFNPLHARVWKGL</sequence>
<comment type="function">
    <text evidence="1">Catalyzes the hydrolytic cleavage of the carbon-nitrogen bond in imidazolone-5-propanoate to yield N-formimidoyl-L-glutamate. It is the third step in the universal histidine degradation pathway.</text>
</comment>
<comment type="catalytic activity">
    <reaction evidence="1">
        <text>4-imidazolone-5-propanoate + H2O = N-formimidoyl-L-glutamate</text>
        <dbReference type="Rhea" id="RHEA:23660"/>
        <dbReference type="ChEBI" id="CHEBI:15377"/>
        <dbReference type="ChEBI" id="CHEBI:58928"/>
        <dbReference type="ChEBI" id="CHEBI:77893"/>
        <dbReference type="EC" id="3.5.2.7"/>
    </reaction>
</comment>
<comment type="cofactor">
    <cofactor evidence="1">
        <name>Zn(2+)</name>
        <dbReference type="ChEBI" id="CHEBI:29105"/>
    </cofactor>
    <cofactor evidence="1">
        <name>Fe(3+)</name>
        <dbReference type="ChEBI" id="CHEBI:29034"/>
    </cofactor>
    <text evidence="1">Binds 1 zinc or iron ion per subunit.</text>
</comment>
<comment type="pathway">
    <text evidence="1">Amino-acid degradation; L-histidine degradation into L-glutamate; N-formimidoyl-L-glutamate from L-histidine: step 3/3.</text>
</comment>
<comment type="subcellular location">
    <subcellularLocation>
        <location evidence="1">Cytoplasm</location>
    </subcellularLocation>
</comment>
<comment type="similarity">
    <text evidence="1">Belongs to the metallo-dependent hydrolases superfamily. HutI family.</text>
</comment>
<organism>
    <name type="scientific">Caulobacter sp. (strain K31)</name>
    <dbReference type="NCBI Taxonomy" id="366602"/>
    <lineage>
        <taxon>Bacteria</taxon>
        <taxon>Pseudomonadati</taxon>
        <taxon>Pseudomonadota</taxon>
        <taxon>Alphaproteobacteria</taxon>
        <taxon>Caulobacterales</taxon>
        <taxon>Caulobacteraceae</taxon>
        <taxon>Caulobacter</taxon>
    </lineage>
</organism>
<dbReference type="EC" id="3.5.2.7" evidence="1"/>
<dbReference type="EMBL" id="CP000927">
    <property type="protein sequence ID" value="ABZ70428.1"/>
    <property type="molecule type" value="Genomic_DNA"/>
</dbReference>
<dbReference type="SMR" id="B0SYU7"/>
<dbReference type="STRING" id="366602.Caul_1298"/>
<dbReference type="KEGG" id="cak:Caul_1298"/>
<dbReference type="eggNOG" id="COG1228">
    <property type="taxonomic scope" value="Bacteria"/>
</dbReference>
<dbReference type="HOGENOM" id="CLU_041647_0_0_5"/>
<dbReference type="OrthoDB" id="9776455at2"/>
<dbReference type="UniPathway" id="UPA00379">
    <property type="reaction ID" value="UER00551"/>
</dbReference>
<dbReference type="GO" id="GO:0005737">
    <property type="term" value="C:cytoplasm"/>
    <property type="evidence" value="ECO:0007669"/>
    <property type="project" value="UniProtKB-SubCell"/>
</dbReference>
<dbReference type="GO" id="GO:0050480">
    <property type="term" value="F:imidazolonepropionase activity"/>
    <property type="evidence" value="ECO:0007669"/>
    <property type="project" value="UniProtKB-UniRule"/>
</dbReference>
<dbReference type="GO" id="GO:0005506">
    <property type="term" value="F:iron ion binding"/>
    <property type="evidence" value="ECO:0007669"/>
    <property type="project" value="UniProtKB-UniRule"/>
</dbReference>
<dbReference type="GO" id="GO:0008270">
    <property type="term" value="F:zinc ion binding"/>
    <property type="evidence" value="ECO:0007669"/>
    <property type="project" value="UniProtKB-UniRule"/>
</dbReference>
<dbReference type="GO" id="GO:0019556">
    <property type="term" value="P:L-histidine catabolic process to glutamate and formamide"/>
    <property type="evidence" value="ECO:0007669"/>
    <property type="project" value="UniProtKB-UniPathway"/>
</dbReference>
<dbReference type="GO" id="GO:0019557">
    <property type="term" value="P:L-histidine catabolic process to glutamate and formate"/>
    <property type="evidence" value="ECO:0007669"/>
    <property type="project" value="UniProtKB-UniPathway"/>
</dbReference>
<dbReference type="CDD" id="cd01296">
    <property type="entry name" value="Imidazolone-5PH"/>
    <property type="match status" value="1"/>
</dbReference>
<dbReference type="FunFam" id="3.20.20.140:FF:000007">
    <property type="entry name" value="Imidazolonepropionase"/>
    <property type="match status" value="1"/>
</dbReference>
<dbReference type="Gene3D" id="3.20.20.140">
    <property type="entry name" value="Metal-dependent hydrolases"/>
    <property type="match status" value="1"/>
</dbReference>
<dbReference type="Gene3D" id="2.30.40.10">
    <property type="entry name" value="Urease, subunit C, domain 1"/>
    <property type="match status" value="1"/>
</dbReference>
<dbReference type="HAMAP" id="MF_00372">
    <property type="entry name" value="HutI"/>
    <property type="match status" value="1"/>
</dbReference>
<dbReference type="InterPro" id="IPR006680">
    <property type="entry name" value="Amidohydro-rel"/>
</dbReference>
<dbReference type="InterPro" id="IPR005920">
    <property type="entry name" value="HutI"/>
</dbReference>
<dbReference type="InterPro" id="IPR011059">
    <property type="entry name" value="Metal-dep_hydrolase_composite"/>
</dbReference>
<dbReference type="InterPro" id="IPR032466">
    <property type="entry name" value="Metal_Hydrolase"/>
</dbReference>
<dbReference type="NCBIfam" id="TIGR01224">
    <property type="entry name" value="hutI"/>
    <property type="match status" value="1"/>
</dbReference>
<dbReference type="PANTHER" id="PTHR42752">
    <property type="entry name" value="IMIDAZOLONEPROPIONASE"/>
    <property type="match status" value="1"/>
</dbReference>
<dbReference type="PANTHER" id="PTHR42752:SF1">
    <property type="entry name" value="IMIDAZOLONEPROPIONASE-RELATED"/>
    <property type="match status" value="1"/>
</dbReference>
<dbReference type="Pfam" id="PF01979">
    <property type="entry name" value="Amidohydro_1"/>
    <property type="match status" value="1"/>
</dbReference>
<dbReference type="SUPFAM" id="SSF51338">
    <property type="entry name" value="Composite domain of metallo-dependent hydrolases"/>
    <property type="match status" value="1"/>
</dbReference>
<dbReference type="SUPFAM" id="SSF51556">
    <property type="entry name" value="Metallo-dependent hydrolases"/>
    <property type="match status" value="1"/>
</dbReference>
<feature type="chain" id="PRO_1000079821" description="Imidazolonepropionase">
    <location>
        <begin position="1"/>
        <end position="401"/>
    </location>
</feature>
<feature type="binding site" evidence="1">
    <location>
        <position position="70"/>
    </location>
    <ligand>
        <name>Fe(3+)</name>
        <dbReference type="ChEBI" id="CHEBI:29034"/>
    </ligand>
</feature>
<feature type="binding site" evidence="1">
    <location>
        <position position="70"/>
    </location>
    <ligand>
        <name>Zn(2+)</name>
        <dbReference type="ChEBI" id="CHEBI:29105"/>
    </ligand>
</feature>
<feature type="binding site" evidence="1">
    <location>
        <position position="72"/>
    </location>
    <ligand>
        <name>Fe(3+)</name>
        <dbReference type="ChEBI" id="CHEBI:29034"/>
    </ligand>
</feature>
<feature type="binding site" evidence="1">
    <location>
        <position position="72"/>
    </location>
    <ligand>
        <name>Zn(2+)</name>
        <dbReference type="ChEBI" id="CHEBI:29105"/>
    </ligand>
</feature>
<feature type="binding site" evidence="1">
    <location>
        <position position="79"/>
    </location>
    <ligand>
        <name>4-imidazolone-5-propanoate</name>
        <dbReference type="ChEBI" id="CHEBI:77893"/>
    </ligand>
</feature>
<feature type="binding site" evidence="1">
    <location>
        <position position="142"/>
    </location>
    <ligand>
        <name>4-imidazolone-5-propanoate</name>
        <dbReference type="ChEBI" id="CHEBI:77893"/>
    </ligand>
</feature>
<feature type="binding site" evidence="1">
    <location>
        <position position="142"/>
    </location>
    <ligand>
        <name>N-formimidoyl-L-glutamate</name>
        <dbReference type="ChEBI" id="CHEBI:58928"/>
    </ligand>
</feature>
<feature type="binding site" evidence="1">
    <location>
        <position position="175"/>
    </location>
    <ligand>
        <name>4-imidazolone-5-propanoate</name>
        <dbReference type="ChEBI" id="CHEBI:77893"/>
    </ligand>
</feature>
<feature type="binding site" evidence="1">
    <location>
        <position position="240"/>
    </location>
    <ligand>
        <name>Fe(3+)</name>
        <dbReference type="ChEBI" id="CHEBI:29034"/>
    </ligand>
</feature>
<feature type="binding site" evidence="1">
    <location>
        <position position="240"/>
    </location>
    <ligand>
        <name>Zn(2+)</name>
        <dbReference type="ChEBI" id="CHEBI:29105"/>
    </ligand>
</feature>
<feature type="binding site" evidence="1">
    <location>
        <position position="243"/>
    </location>
    <ligand>
        <name>4-imidazolone-5-propanoate</name>
        <dbReference type="ChEBI" id="CHEBI:77893"/>
    </ligand>
</feature>
<feature type="binding site" evidence="1">
    <location>
        <position position="315"/>
    </location>
    <ligand>
        <name>Fe(3+)</name>
        <dbReference type="ChEBI" id="CHEBI:29034"/>
    </ligand>
</feature>
<feature type="binding site" evidence="1">
    <location>
        <position position="315"/>
    </location>
    <ligand>
        <name>Zn(2+)</name>
        <dbReference type="ChEBI" id="CHEBI:29105"/>
    </ligand>
</feature>
<feature type="binding site" evidence="1">
    <location>
        <position position="317"/>
    </location>
    <ligand>
        <name>N-formimidoyl-L-glutamate</name>
        <dbReference type="ChEBI" id="CHEBI:58928"/>
    </ligand>
</feature>
<feature type="binding site" evidence="1">
    <location>
        <position position="319"/>
    </location>
    <ligand>
        <name>N-formimidoyl-L-glutamate</name>
        <dbReference type="ChEBI" id="CHEBI:58928"/>
    </ligand>
</feature>
<feature type="binding site" evidence="1">
    <location>
        <position position="320"/>
    </location>
    <ligand>
        <name>4-imidazolone-5-propanoate</name>
        <dbReference type="ChEBI" id="CHEBI:77893"/>
    </ligand>
</feature>
<name>HUTI_CAUSK</name>
<evidence type="ECO:0000255" key="1">
    <source>
        <dbReference type="HAMAP-Rule" id="MF_00372"/>
    </source>
</evidence>
<reference key="1">
    <citation type="submission" date="2008-01" db="EMBL/GenBank/DDBJ databases">
        <title>Complete sequence of chromosome of Caulobacter sp. K31.</title>
        <authorList>
            <consortium name="US DOE Joint Genome Institute"/>
            <person name="Copeland A."/>
            <person name="Lucas S."/>
            <person name="Lapidus A."/>
            <person name="Barry K."/>
            <person name="Glavina del Rio T."/>
            <person name="Dalin E."/>
            <person name="Tice H."/>
            <person name="Pitluck S."/>
            <person name="Bruce D."/>
            <person name="Goodwin L."/>
            <person name="Thompson L.S."/>
            <person name="Brettin T."/>
            <person name="Detter J.C."/>
            <person name="Han C."/>
            <person name="Schmutz J."/>
            <person name="Larimer F."/>
            <person name="Land M."/>
            <person name="Hauser L."/>
            <person name="Kyrpides N."/>
            <person name="Kim E."/>
            <person name="Stephens C."/>
            <person name="Richardson P."/>
        </authorList>
    </citation>
    <scope>NUCLEOTIDE SEQUENCE [LARGE SCALE GENOMIC DNA]</scope>
    <source>
        <strain>K31</strain>
    </source>
</reference>
<protein>
    <recommendedName>
        <fullName evidence="1">Imidazolonepropionase</fullName>
        <ecNumber evidence="1">3.5.2.7</ecNumber>
    </recommendedName>
    <alternativeName>
        <fullName evidence="1">Imidazolone-5-propionate hydrolase</fullName>
    </alternativeName>
</protein>
<proteinExistence type="inferred from homology"/>
<gene>
    <name evidence="1" type="primary">hutI</name>
    <name type="ordered locus">Caul_1298</name>
</gene>
<accession>B0SYU7</accession>
<keyword id="KW-0963">Cytoplasm</keyword>
<keyword id="KW-0369">Histidine metabolism</keyword>
<keyword id="KW-0378">Hydrolase</keyword>
<keyword id="KW-0408">Iron</keyword>
<keyword id="KW-0479">Metal-binding</keyword>
<keyword id="KW-0862">Zinc</keyword>